<name>PPAL_XENLA</name>
<protein>
    <recommendedName>
        <fullName>Lysosomal acid phosphatase</fullName>
        <shortName>LAP</shortName>
        <ecNumber>3.1.3.2</ecNumber>
    </recommendedName>
</protein>
<organism>
    <name type="scientific">Xenopus laevis</name>
    <name type="common">African clawed frog</name>
    <dbReference type="NCBI Taxonomy" id="8355"/>
    <lineage>
        <taxon>Eukaryota</taxon>
        <taxon>Metazoa</taxon>
        <taxon>Chordata</taxon>
        <taxon>Craniata</taxon>
        <taxon>Vertebrata</taxon>
        <taxon>Euteleostomi</taxon>
        <taxon>Amphibia</taxon>
        <taxon>Batrachia</taxon>
        <taxon>Anura</taxon>
        <taxon>Pipoidea</taxon>
        <taxon>Pipidae</taxon>
        <taxon>Xenopodinae</taxon>
        <taxon>Xenopus</taxon>
        <taxon>Xenopus</taxon>
    </lineage>
</organism>
<comment type="catalytic activity">
    <reaction>
        <text>a phosphate monoester + H2O = an alcohol + phosphate</text>
        <dbReference type="Rhea" id="RHEA:15017"/>
        <dbReference type="ChEBI" id="CHEBI:15377"/>
        <dbReference type="ChEBI" id="CHEBI:30879"/>
        <dbReference type="ChEBI" id="CHEBI:43474"/>
        <dbReference type="ChEBI" id="CHEBI:67140"/>
        <dbReference type="EC" id="3.1.3.2"/>
    </reaction>
</comment>
<comment type="subcellular location">
    <subcellularLocation>
        <location evidence="2">Lysosome membrane</location>
        <topology evidence="3">Single-pass membrane protein</topology>
        <orientation evidence="2">Lumenal side</orientation>
    </subcellularLocation>
    <subcellularLocation>
        <location evidence="2">Lysosome lumen</location>
    </subcellularLocation>
    <text evidence="2">The soluble form arises by proteolytic processing of the membrane-bound form.</text>
</comment>
<comment type="PTM">
    <text evidence="1">The membrane-bound form is converted to the soluble form by sequential proteolytic processing. First, the C-terminal cytoplasmic tail is removed. Cleavage by a lysosomal protease releases the soluble form in the lysosome lumen (By similarity).</text>
</comment>
<comment type="similarity">
    <text evidence="4">Belongs to the histidine acid phosphatase family.</text>
</comment>
<evidence type="ECO:0000250" key="1"/>
<evidence type="ECO:0000250" key="2">
    <source>
        <dbReference type="UniProtKB" id="P11117"/>
    </source>
</evidence>
<evidence type="ECO:0000255" key="3"/>
<evidence type="ECO:0000305" key="4"/>
<accession>B1H1P9</accession>
<gene>
    <name type="primary">acp2</name>
</gene>
<sequence>MADGSCLGSGPQLGLIALLVVLLFSAVPLAQSRELRFVTLVYRHGDRSPVHGYPTDVHKESVWPQGYGQLTQVGMKQHWDLGQELRARYKGFLNESYNRHEIYVRSTDVDRTLMSAEANLAGLYPPEGPQIFNPNITWQPIPIHTIPESEDQLLKFPISPCPAYVKLQEETRQSAEYINMTTTYKAFLQMVANKTGLSDCTLESVWSVYDTLFCEKTHNFSLPTWATADVLSKLNKLKDFSFVFLFGVHERVKKARLQGGVLVDQILKNMTAAANNASNGLKLLAYSAHDSTLGALQLALDVYNGKQAPYASCHIFELYKEDSGNFTVQMYFRNESGKTPYPVSLPGCAHACPLQDFQSLLQPILAQDWEEECQTTSFIMTEETIIGLTIGAIALFIIIVVLMLLSCNEPKDDGYQHVSDEGDDHETKGLAM</sequence>
<dbReference type="EC" id="3.1.3.2"/>
<dbReference type="EMBL" id="BC160691">
    <property type="protein sequence ID" value="AAI60691.1"/>
    <property type="molecule type" value="mRNA"/>
</dbReference>
<dbReference type="RefSeq" id="NP_001121203.1">
    <property type="nucleotide sequence ID" value="NM_001127731.1"/>
</dbReference>
<dbReference type="SMR" id="B1H1P9"/>
<dbReference type="GlyCosmos" id="B1H1P9">
    <property type="glycosylation" value="7 sites, No reported glycans"/>
</dbReference>
<dbReference type="GeneID" id="100158274"/>
<dbReference type="KEGG" id="xla:100158274"/>
<dbReference type="AGR" id="Xenbase:XB-GENE-6253082"/>
<dbReference type="CTD" id="100158274"/>
<dbReference type="Xenbase" id="XB-GENE-6253082">
    <property type="gene designation" value="acp2.S"/>
</dbReference>
<dbReference type="OMA" id="DPHQESD"/>
<dbReference type="OrthoDB" id="258392at2759"/>
<dbReference type="Proteomes" id="UP000186698">
    <property type="component" value="Chromosome 4S"/>
</dbReference>
<dbReference type="Bgee" id="100158274">
    <property type="expression patterns" value="Expressed in intestine and 19 other cell types or tissues"/>
</dbReference>
<dbReference type="GO" id="GO:0043202">
    <property type="term" value="C:lysosomal lumen"/>
    <property type="evidence" value="ECO:0007669"/>
    <property type="project" value="UniProtKB-SubCell"/>
</dbReference>
<dbReference type="GO" id="GO:0005765">
    <property type="term" value="C:lysosomal membrane"/>
    <property type="evidence" value="ECO:0007669"/>
    <property type="project" value="UniProtKB-SubCell"/>
</dbReference>
<dbReference type="GO" id="GO:0005764">
    <property type="term" value="C:lysosome"/>
    <property type="evidence" value="ECO:0000318"/>
    <property type="project" value="GO_Central"/>
</dbReference>
<dbReference type="GO" id="GO:0003993">
    <property type="term" value="F:acid phosphatase activity"/>
    <property type="evidence" value="ECO:0000318"/>
    <property type="project" value="GO_Central"/>
</dbReference>
<dbReference type="GO" id="GO:0007040">
    <property type="term" value="P:lysosome organization"/>
    <property type="evidence" value="ECO:0007669"/>
    <property type="project" value="TreeGrafter"/>
</dbReference>
<dbReference type="CDD" id="cd07061">
    <property type="entry name" value="HP_HAP_like"/>
    <property type="match status" value="1"/>
</dbReference>
<dbReference type="FunFam" id="3.40.50.1240:FF:000010">
    <property type="entry name" value="Prostatic acid phosphatase"/>
    <property type="match status" value="1"/>
</dbReference>
<dbReference type="Gene3D" id="3.40.50.1240">
    <property type="entry name" value="Phosphoglycerate mutase-like"/>
    <property type="match status" value="1"/>
</dbReference>
<dbReference type="InterPro" id="IPR033379">
    <property type="entry name" value="Acid_Pase_AS"/>
</dbReference>
<dbReference type="InterPro" id="IPR000560">
    <property type="entry name" value="His_Pase_clade-2"/>
</dbReference>
<dbReference type="InterPro" id="IPR029033">
    <property type="entry name" value="His_PPase_superfam"/>
</dbReference>
<dbReference type="InterPro" id="IPR050645">
    <property type="entry name" value="Histidine_acid_phosphatase"/>
</dbReference>
<dbReference type="PANTHER" id="PTHR11567">
    <property type="entry name" value="ACID PHOSPHATASE-RELATED"/>
    <property type="match status" value="1"/>
</dbReference>
<dbReference type="PANTHER" id="PTHR11567:SF180">
    <property type="entry name" value="LYSOSOMAL ACID PHOSPHATASE"/>
    <property type="match status" value="1"/>
</dbReference>
<dbReference type="Pfam" id="PF00328">
    <property type="entry name" value="His_Phos_2"/>
    <property type="match status" value="1"/>
</dbReference>
<dbReference type="SUPFAM" id="SSF53254">
    <property type="entry name" value="Phosphoglycerate mutase-like"/>
    <property type="match status" value="1"/>
</dbReference>
<dbReference type="PROSITE" id="PS00616">
    <property type="entry name" value="HIS_ACID_PHOSPHAT_1"/>
    <property type="match status" value="1"/>
</dbReference>
<dbReference type="PROSITE" id="PS00778">
    <property type="entry name" value="HIS_ACID_PHOSPHAT_2"/>
    <property type="match status" value="1"/>
</dbReference>
<keyword id="KW-1015">Disulfide bond</keyword>
<keyword id="KW-0325">Glycoprotein</keyword>
<keyword id="KW-0378">Hydrolase</keyword>
<keyword id="KW-0458">Lysosome</keyword>
<keyword id="KW-0472">Membrane</keyword>
<keyword id="KW-1185">Reference proteome</keyword>
<keyword id="KW-0732">Signal</keyword>
<keyword id="KW-0812">Transmembrane</keyword>
<keyword id="KW-1133">Transmembrane helix</keyword>
<proteinExistence type="evidence at transcript level"/>
<reference key="1">
    <citation type="submission" date="2008-03" db="EMBL/GenBank/DDBJ databases">
        <authorList>
            <consortium name="NIH - Xenopus Gene Collection (XGC) project"/>
        </authorList>
    </citation>
    <scope>NUCLEOTIDE SEQUENCE [LARGE SCALE MRNA]</scope>
    <source>
        <tissue>Liver</tissue>
    </source>
</reference>
<feature type="signal peptide" evidence="3">
    <location>
        <begin position="1"/>
        <end position="32"/>
    </location>
</feature>
<feature type="chain" id="PRO_0000356291" description="Lysosomal acid phosphatase">
    <location>
        <begin position="33"/>
        <end position="432"/>
    </location>
</feature>
<feature type="topological domain" description="Lumenal" evidence="3">
    <location>
        <begin position="33"/>
        <end position="384"/>
    </location>
</feature>
<feature type="transmembrane region" description="Helical" evidence="3">
    <location>
        <begin position="385"/>
        <end position="405"/>
    </location>
</feature>
<feature type="topological domain" description="Cytoplasmic" evidence="3">
    <location>
        <begin position="406"/>
        <end position="432"/>
    </location>
</feature>
<feature type="active site" description="Nucleophile" evidence="1">
    <location>
        <position position="44"/>
    </location>
</feature>
<feature type="active site" description="Proton donor" evidence="1">
    <location>
        <position position="290"/>
    </location>
</feature>
<feature type="glycosylation site" description="N-linked (GlcNAc...) asparagine" evidence="3">
    <location>
        <position position="94"/>
    </location>
</feature>
<feature type="glycosylation site" description="N-linked (GlcNAc...) asparagine" evidence="3">
    <location>
        <position position="135"/>
    </location>
</feature>
<feature type="glycosylation site" description="N-linked (GlcNAc...) asparagine" evidence="3">
    <location>
        <position position="179"/>
    </location>
</feature>
<feature type="glycosylation site" description="N-linked (GlcNAc...) asparagine" evidence="3">
    <location>
        <position position="193"/>
    </location>
</feature>
<feature type="glycosylation site" description="N-linked (GlcNAc...) asparagine" evidence="3">
    <location>
        <position position="269"/>
    </location>
</feature>
<feature type="glycosylation site" description="N-linked (GlcNAc...) asparagine" evidence="3">
    <location>
        <position position="325"/>
    </location>
</feature>
<feature type="glycosylation site" description="N-linked (GlcNAc...) asparagine" evidence="3">
    <location>
        <position position="334"/>
    </location>
</feature>
<feature type="disulfide bond" evidence="1">
    <location>
        <begin position="161"/>
        <end position="373"/>
    </location>
</feature>
<feature type="disulfide bond" evidence="1">
    <location>
        <begin position="214"/>
        <end position="313"/>
    </location>
</feature>
<feature type="disulfide bond" evidence="1">
    <location>
        <begin position="348"/>
        <end position="352"/>
    </location>
</feature>